<reference key="1">
    <citation type="journal article" date="2008" name="DNA Res.">
        <title>Complete genome sequence of Finegoldia magna, an anaerobic opportunistic pathogen.</title>
        <authorList>
            <person name="Goto T."/>
            <person name="Yamashita A."/>
            <person name="Hirakawa H."/>
            <person name="Matsutani M."/>
            <person name="Todo K."/>
            <person name="Ohshima K."/>
            <person name="Toh H."/>
            <person name="Miyamoto K."/>
            <person name="Kuhara S."/>
            <person name="Hattori M."/>
            <person name="Shimizu T."/>
            <person name="Akimoto S."/>
        </authorList>
    </citation>
    <scope>NUCLEOTIDE SEQUENCE [LARGE SCALE GENOMIC DNA]</scope>
    <source>
        <strain>ATCC 29328 / DSM 20472 / WAL 2508</strain>
    </source>
</reference>
<dbReference type="EC" id="3.1.-.-" evidence="1"/>
<dbReference type="EMBL" id="AP008971">
    <property type="protein sequence ID" value="BAG08151.1"/>
    <property type="molecule type" value="Genomic_DNA"/>
</dbReference>
<dbReference type="RefSeq" id="WP_012290595.1">
    <property type="nucleotide sequence ID" value="NC_010376.1"/>
</dbReference>
<dbReference type="SMR" id="B0S1B1"/>
<dbReference type="STRING" id="334413.FMG_0733"/>
<dbReference type="KEGG" id="fma:FMG_0733"/>
<dbReference type="eggNOG" id="COG0319">
    <property type="taxonomic scope" value="Bacteria"/>
</dbReference>
<dbReference type="HOGENOM" id="CLU_106710_3_0_9"/>
<dbReference type="Proteomes" id="UP000001319">
    <property type="component" value="Chromosome"/>
</dbReference>
<dbReference type="GO" id="GO:0005737">
    <property type="term" value="C:cytoplasm"/>
    <property type="evidence" value="ECO:0007669"/>
    <property type="project" value="UniProtKB-SubCell"/>
</dbReference>
<dbReference type="GO" id="GO:0004222">
    <property type="term" value="F:metalloendopeptidase activity"/>
    <property type="evidence" value="ECO:0007669"/>
    <property type="project" value="InterPro"/>
</dbReference>
<dbReference type="GO" id="GO:0004521">
    <property type="term" value="F:RNA endonuclease activity"/>
    <property type="evidence" value="ECO:0007669"/>
    <property type="project" value="UniProtKB-UniRule"/>
</dbReference>
<dbReference type="GO" id="GO:0008270">
    <property type="term" value="F:zinc ion binding"/>
    <property type="evidence" value="ECO:0007669"/>
    <property type="project" value="UniProtKB-UniRule"/>
</dbReference>
<dbReference type="GO" id="GO:0006364">
    <property type="term" value="P:rRNA processing"/>
    <property type="evidence" value="ECO:0007669"/>
    <property type="project" value="UniProtKB-UniRule"/>
</dbReference>
<dbReference type="Gene3D" id="3.40.390.30">
    <property type="entry name" value="Metalloproteases ('zincins'), catalytic domain"/>
    <property type="match status" value="1"/>
</dbReference>
<dbReference type="HAMAP" id="MF_00009">
    <property type="entry name" value="Endoribonucl_YbeY"/>
    <property type="match status" value="1"/>
</dbReference>
<dbReference type="InterPro" id="IPR023091">
    <property type="entry name" value="MetalPrtase_cat_dom_sf_prd"/>
</dbReference>
<dbReference type="InterPro" id="IPR002036">
    <property type="entry name" value="YbeY"/>
</dbReference>
<dbReference type="NCBIfam" id="TIGR00043">
    <property type="entry name" value="rRNA maturation RNase YbeY"/>
    <property type="match status" value="1"/>
</dbReference>
<dbReference type="PANTHER" id="PTHR46986">
    <property type="entry name" value="ENDORIBONUCLEASE YBEY, CHLOROPLASTIC"/>
    <property type="match status" value="1"/>
</dbReference>
<dbReference type="PANTHER" id="PTHR46986:SF1">
    <property type="entry name" value="ENDORIBONUCLEASE YBEY, CHLOROPLASTIC"/>
    <property type="match status" value="1"/>
</dbReference>
<dbReference type="Pfam" id="PF02130">
    <property type="entry name" value="YbeY"/>
    <property type="match status" value="1"/>
</dbReference>
<dbReference type="SUPFAM" id="SSF55486">
    <property type="entry name" value="Metalloproteases ('zincins'), catalytic domain"/>
    <property type="match status" value="1"/>
</dbReference>
<organism>
    <name type="scientific">Finegoldia magna (strain ATCC 29328 / DSM 20472 / WAL 2508)</name>
    <name type="common">Peptostreptococcus magnus</name>
    <dbReference type="NCBI Taxonomy" id="334413"/>
    <lineage>
        <taxon>Bacteria</taxon>
        <taxon>Bacillati</taxon>
        <taxon>Bacillota</taxon>
        <taxon>Tissierellia</taxon>
        <taxon>Tissierellales</taxon>
        <taxon>Peptoniphilaceae</taxon>
        <taxon>Finegoldia</taxon>
    </lineage>
</organism>
<name>YBEY_FINM2</name>
<gene>
    <name evidence="1" type="primary">ybeY</name>
    <name type="ordered locus">FMG_0733</name>
</gene>
<proteinExistence type="inferred from homology"/>
<keyword id="KW-0963">Cytoplasm</keyword>
<keyword id="KW-0255">Endonuclease</keyword>
<keyword id="KW-0378">Hydrolase</keyword>
<keyword id="KW-0479">Metal-binding</keyword>
<keyword id="KW-0540">Nuclease</keyword>
<keyword id="KW-1185">Reference proteome</keyword>
<keyword id="KW-0690">Ribosome biogenesis</keyword>
<keyword id="KW-0698">rRNA processing</keyword>
<keyword id="KW-0862">Zinc</keyword>
<sequence>MIIQISNRQEDFQIDDELTSDIEKSIRICLLQELNDDNYEISLSFVSESEIRKLNSDYRDKDSVTDVLSFPLDDDFAIQTNLLGDIIICCKRAIEQAKEYNHSIKREIVYLVVHSMFHLLGYDHIDESDRIIMRNKEKSALKEIGIYKDEEFK</sequence>
<feature type="chain" id="PRO_1000089177" description="Endoribonuclease YbeY">
    <location>
        <begin position="1"/>
        <end position="153"/>
    </location>
</feature>
<feature type="binding site" evidence="1">
    <location>
        <position position="114"/>
    </location>
    <ligand>
        <name>Zn(2+)</name>
        <dbReference type="ChEBI" id="CHEBI:29105"/>
        <note>catalytic</note>
    </ligand>
</feature>
<feature type="binding site" evidence="1">
    <location>
        <position position="118"/>
    </location>
    <ligand>
        <name>Zn(2+)</name>
        <dbReference type="ChEBI" id="CHEBI:29105"/>
        <note>catalytic</note>
    </ligand>
</feature>
<feature type="binding site" evidence="1">
    <location>
        <position position="124"/>
    </location>
    <ligand>
        <name>Zn(2+)</name>
        <dbReference type="ChEBI" id="CHEBI:29105"/>
        <note>catalytic</note>
    </ligand>
</feature>
<protein>
    <recommendedName>
        <fullName evidence="1">Endoribonuclease YbeY</fullName>
        <ecNumber evidence="1">3.1.-.-</ecNumber>
    </recommendedName>
</protein>
<evidence type="ECO:0000255" key="1">
    <source>
        <dbReference type="HAMAP-Rule" id="MF_00009"/>
    </source>
</evidence>
<accession>B0S1B1</accession>
<comment type="function">
    <text evidence="1">Single strand-specific metallo-endoribonuclease involved in late-stage 70S ribosome quality control and in maturation of the 3' terminus of the 16S rRNA.</text>
</comment>
<comment type="cofactor">
    <cofactor evidence="1">
        <name>Zn(2+)</name>
        <dbReference type="ChEBI" id="CHEBI:29105"/>
    </cofactor>
    <text evidence="1">Binds 1 zinc ion.</text>
</comment>
<comment type="subcellular location">
    <subcellularLocation>
        <location evidence="1">Cytoplasm</location>
    </subcellularLocation>
</comment>
<comment type="similarity">
    <text evidence="1">Belongs to the endoribonuclease YbeY family.</text>
</comment>